<proteinExistence type="inferred from homology"/>
<reference key="1">
    <citation type="submission" date="2008-05" db="EMBL/GenBank/DDBJ databases">
        <title>Complete sequence of Rhodopseudomonas palustris TIE-1.</title>
        <authorList>
            <consortium name="US DOE Joint Genome Institute"/>
            <person name="Lucas S."/>
            <person name="Copeland A."/>
            <person name="Lapidus A."/>
            <person name="Glavina del Rio T."/>
            <person name="Dalin E."/>
            <person name="Tice H."/>
            <person name="Pitluck S."/>
            <person name="Chain P."/>
            <person name="Malfatti S."/>
            <person name="Shin M."/>
            <person name="Vergez L."/>
            <person name="Lang D."/>
            <person name="Schmutz J."/>
            <person name="Larimer F."/>
            <person name="Land M."/>
            <person name="Hauser L."/>
            <person name="Kyrpides N."/>
            <person name="Mikhailova N."/>
            <person name="Emerson D."/>
            <person name="Newman D.K."/>
            <person name="Roden E."/>
            <person name="Richardson P."/>
        </authorList>
    </citation>
    <scope>NUCLEOTIDE SEQUENCE [LARGE SCALE GENOMIC DNA]</scope>
    <source>
        <strain>TIE-1</strain>
    </source>
</reference>
<protein>
    <recommendedName>
        <fullName evidence="1">Adenylosuccinate synthetase</fullName>
        <shortName evidence="1">AMPSase</shortName>
        <shortName evidence="1">AdSS</shortName>
        <ecNumber evidence="1">6.3.4.4</ecNumber>
    </recommendedName>
    <alternativeName>
        <fullName evidence="1">IMP--aspartate ligase</fullName>
    </alternativeName>
</protein>
<dbReference type="EC" id="6.3.4.4" evidence="1"/>
<dbReference type="EMBL" id="CP001096">
    <property type="protein sequence ID" value="ACF03265.1"/>
    <property type="molecule type" value="Genomic_DNA"/>
</dbReference>
<dbReference type="RefSeq" id="WP_012497510.1">
    <property type="nucleotide sequence ID" value="NC_011004.1"/>
</dbReference>
<dbReference type="SMR" id="B3Q6W6"/>
<dbReference type="KEGG" id="rpt:Rpal_4774"/>
<dbReference type="HOGENOM" id="CLU_029848_0_0_5"/>
<dbReference type="OrthoDB" id="9807553at2"/>
<dbReference type="UniPathway" id="UPA00075">
    <property type="reaction ID" value="UER00335"/>
</dbReference>
<dbReference type="Proteomes" id="UP000001725">
    <property type="component" value="Chromosome"/>
</dbReference>
<dbReference type="GO" id="GO:0005737">
    <property type="term" value="C:cytoplasm"/>
    <property type="evidence" value="ECO:0007669"/>
    <property type="project" value="UniProtKB-SubCell"/>
</dbReference>
<dbReference type="GO" id="GO:0004019">
    <property type="term" value="F:adenylosuccinate synthase activity"/>
    <property type="evidence" value="ECO:0007669"/>
    <property type="project" value="UniProtKB-UniRule"/>
</dbReference>
<dbReference type="GO" id="GO:0005525">
    <property type="term" value="F:GTP binding"/>
    <property type="evidence" value="ECO:0007669"/>
    <property type="project" value="UniProtKB-UniRule"/>
</dbReference>
<dbReference type="GO" id="GO:0000287">
    <property type="term" value="F:magnesium ion binding"/>
    <property type="evidence" value="ECO:0007669"/>
    <property type="project" value="UniProtKB-UniRule"/>
</dbReference>
<dbReference type="GO" id="GO:0044208">
    <property type="term" value="P:'de novo' AMP biosynthetic process"/>
    <property type="evidence" value="ECO:0007669"/>
    <property type="project" value="UniProtKB-UniRule"/>
</dbReference>
<dbReference type="GO" id="GO:0046040">
    <property type="term" value="P:IMP metabolic process"/>
    <property type="evidence" value="ECO:0007669"/>
    <property type="project" value="TreeGrafter"/>
</dbReference>
<dbReference type="CDD" id="cd03108">
    <property type="entry name" value="AdSS"/>
    <property type="match status" value="1"/>
</dbReference>
<dbReference type="FunFam" id="1.10.300.10:FF:000001">
    <property type="entry name" value="Adenylosuccinate synthetase"/>
    <property type="match status" value="1"/>
</dbReference>
<dbReference type="FunFam" id="3.90.170.10:FF:000001">
    <property type="entry name" value="Adenylosuccinate synthetase"/>
    <property type="match status" value="1"/>
</dbReference>
<dbReference type="Gene3D" id="3.40.440.10">
    <property type="entry name" value="Adenylosuccinate Synthetase, subunit A, domain 1"/>
    <property type="match status" value="1"/>
</dbReference>
<dbReference type="Gene3D" id="1.10.300.10">
    <property type="entry name" value="Adenylosuccinate Synthetase, subunit A, domain 2"/>
    <property type="match status" value="1"/>
</dbReference>
<dbReference type="Gene3D" id="3.90.170.10">
    <property type="entry name" value="Adenylosuccinate Synthetase, subunit A, domain 3"/>
    <property type="match status" value="1"/>
</dbReference>
<dbReference type="HAMAP" id="MF_00011">
    <property type="entry name" value="Adenylosucc_synth"/>
    <property type="match status" value="1"/>
</dbReference>
<dbReference type="InterPro" id="IPR018220">
    <property type="entry name" value="Adenylosuccin_syn_GTP-bd"/>
</dbReference>
<dbReference type="InterPro" id="IPR033128">
    <property type="entry name" value="Adenylosuccin_syn_Lys_AS"/>
</dbReference>
<dbReference type="InterPro" id="IPR042109">
    <property type="entry name" value="Adenylosuccinate_synth_dom1"/>
</dbReference>
<dbReference type="InterPro" id="IPR042110">
    <property type="entry name" value="Adenylosuccinate_synth_dom2"/>
</dbReference>
<dbReference type="InterPro" id="IPR042111">
    <property type="entry name" value="Adenylosuccinate_synth_dom3"/>
</dbReference>
<dbReference type="InterPro" id="IPR001114">
    <property type="entry name" value="Adenylosuccinate_synthetase"/>
</dbReference>
<dbReference type="InterPro" id="IPR027417">
    <property type="entry name" value="P-loop_NTPase"/>
</dbReference>
<dbReference type="NCBIfam" id="NF002223">
    <property type="entry name" value="PRK01117.1"/>
    <property type="match status" value="1"/>
</dbReference>
<dbReference type="NCBIfam" id="TIGR00184">
    <property type="entry name" value="purA"/>
    <property type="match status" value="1"/>
</dbReference>
<dbReference type="PANTHER" id="PTHR11846">
    <property type="entry name" value="ADENYLOSUCCINATE SYNTHETASE"/>
    <property type="match status" value="1"/>
</dbReference>
<dbReference type="PANTHER" id="PTHR11846:SF0">
    <property type="entry name" value="ADENYLOSUCCINATE SYNTHETASE"/>
    <property type="match status" value="1"/>
</dbReference>
<dbReference type="Pfam" id="PF00709">
    <property type="entry name" value="Adenylsucc_synt"/>
    <property type="match status" value="1"/>
</dbReference>
<dbReference type="SMART" id="SM00788">
    <property type="entry name" value="Adenylsucc_synt"/>
    <property type="match status" value="1"/>
</dbReference>
<dbReference type="SUPFAM" id="SSF52540">
    <property type="entry name" value="P-loop containing nucleoside triphosphate hydrolases"/>
    <property type="match status" value="1"/>
</dbReference>
<dbReference type="PROSITE" id="PS01266">
    <property type="entry name" value="ADENYLOSUCCIN_SYN_1"/>
    <property type="match status" value="1"/>
</dbReference>
<dbReference type="PROSITE" id="PS00513">
    <property type="entry name" value="ADENYLOSUCCIN_SYN_2"/>
    <property type="match status" value="1"/>
</dbReference>
<gene>
    <name evidence="1" type="primary">purA</name>
    <name type="ordered locus">Rpal_4774</name>
</gene>
<name>PURA_RHOPT</name>
<feature type="chain" id="PRO_1000089331" description="Adenylosuccinate synthetase">
    <location>
        <begin position="1"/>
        <end position="430"/>
    </location>
</feature>
<feature type="active site" description="Proton acceptor" evidence="1">
    <location>
        <position position="13"/>
    </location>
</feature>
<feature type="active site" description="Proton donor" evidence="1">
    <location>
        <position position="41"/>
    </location>
</feature>
<feature type="binding site" evidence="1">
    <location>
        <begin position="12"/>
        <end position="18"/>
    </location>
    <ligand>
        <name>GTP</name>
        <dbReference type="ChEBI" id="CHEBI:37565"/>
    </ligand>
</feature>
<feature type="binding site" description="in other chain" evidence="1">
    <location>
        <begin position="13"/>
        <end position="16"/>
    </location>
    <ligand>
        <name>IMP</name>
        <dbReference type="ChEBI" id="CHEBI:58053"/>
        <note>ligand shared between dimeric partners</note>
    </ligand>
</feature>
<feature type="binding site" evidence="1">
    <location>
        <position position="13"/>
    </location>
    <ligand>
        <name>Mg(2+)</name>
        <dbReference type="ChEBI" id="CHEBI:18420"/>
    </ligand>
</feature>
<feature type="binding site" description="in other chain" evidence="1">
    <location>
        <begin position="38"/>
        <end position="41"/>
    </location>
    <ligand>
        <name>IMP</name>
        <dbReference type="ChEBI" id="CHEBI:58053"/>
        <note>ligand shared between dimeric partners</note>
    </ligand>
</feature>
<feature type="binding site" evidence="1">
    <location>
        <begin position="40"/>
        <end position="42"/>
    </location>
    <ligand>
        <name>GTP</name>
        <dbReference type="ChEBI" id="CHEBI:37565"/>
    </ligand>
</feature>
<feature type="binding site" evidence="1">
    <location>
        <position position="40"/>
    </location>
    <ligand>
        <name>Mg(2+)</name>
        <dbReference type="ChEBI" id="CHEBI:18420"/>
    </ligand>
</feature>
<feature type="binding site" description="in other chain" evidence="1">
    <location>
        <position position="130"/>
    </location>
    <ligand>
        <name>IMP</name>
        <dbReference type="ChEBI" id="CHEBI:58053"/>
        <note>ligand shared between dimeric partners</note>
    </ligand>
</feature>
<feature type="binding site" evidence="1">
    <location>
        <position position="144"/>
    </location>
    <ligand>
        <name>IMP</name>
        <dbReference type="ChEBI" id="CHEBI:58053"/>
        <note>ligand shared between dimeric partners</note>
    </ligand>
</feature>
<feature type="binding site" description="in other chain" evidence="1">
    <location>
        <position position="224"/>
    </location>
    <ligand>
        <name>IMP</name>
        <dbReference type="ChEBI" id="CHEBI:58053"/>
        <note>ligand shared between dimeric partners</note>
    </ligand>
</feature>
<feature type="binding site" description="in other chain" evidence="1">
    <location>
        <position position="239"/>
    </location>
    <ligand>
        <name>IMP</name>
        <dbReference type="ChEBI" id="CHEBI:58053"/>
        <note>ligand shared between dimeric partners</note>
    </ligand>
</feature>
<feature type="binding site" evidence="1">
    <location>
        <begin position="299"/>
        <end position="305"/>
    </location>
    <ligand>
        <name>substrate</name>
    </ligand>
</feature>
<feature type="binding site" description="in other chain" evidence="1">
    <location>
        <position position="303"/>
    </location>
    <ligand>
        <name>IMP</name>
        <dbReference type="ChEBI" id="CHEBI:58053"/>
        <note>ligand shared between dimeric partners</note>
    </ligand>
</feature>
<feature type="binding site" evidence="1">
    <location>
        <position position="305"/>
    </location>
    <ligand>
        <name>GTP</name>
        <dbReference type="ChEBI" id="CHEBI:37565"/>
    </ligand>
</feature>
<feature type="binding site" evidence="1">
    <location>
        <begin position="331"/>
        <end position="333"/>
    </location>
    <ligand>
        <name>GTP</name>
        <dbReference type="ChEBI" id="CHEBI:37565"/>
    </ligand>
</feature>
<feature type="binding site" evidence="1">
    <location>
        <begin position="413"/>
        <end position="415"/>
    </location>
    <ligand>
        <name>GTP</name>
        <dbReference type="ChEBI" id="CHEBI:37565"/>
    </ligand>
</feature>
<sequence>MANVVVVGAQWGDEGKGKIVDWLSEQADIVVRFQGGHNAGHTLVINGQTYKLALLPSGVLRPSKLAVIGNGVVFDPQAFLDEVKKLQGQGVAISPENLRIAENVTLILPLHRELDATRENAAKAGAIGTTQRGIGPAYEDKVGRRAIRLMDLADLDTLPTKIERLLAHHNALRRGLGQPEIDAGQILADLSAMAPHLLPYAESVWRLLDIKRREGKRILFEGAQGALLDVDHGTYPYVTSSNTVAAQAATGTGMGPGAVGYVLGICKAYTTRVGAGPFPTELTNEIGEEIGRRGKEFGVNTGRKRRCGWFDAVLVRQTVRTCGIHGLALTKLDILDGFDSVEVCVGYKLDGKEIDYLPAGEGAQARVEPIYETIEGWKEPTANARSWAELPAQAIKYVRRIEELVGCPVALLSTSPEREDTILVQNPFEA</sequence>
<accession>B3Q6W6</accession>
<comment type="function">
    <text evidence="1">Plays an important role in the de novo pathway of purine nucleotide biosynthesis. Catalyzes the first committed step in the biosynthesis of AMP from IMP.</text>
</comment>
<comment type="catalytic activity">
    <reaction evidence="1">
        <text>IMP + L-aspartate + GTP = N(6)-(1,2-dicarboxyethyl)-AMP + GDP + phosphate + 2 H(+)</text>
        <dbReference type="Rhea" id="RHEA:15753"/>
        <dbReference type="ChEBI" id="CHEBI:15378"/>
        <dbReference type="ChEBI" id="CHEBI:29991"/>
        <dbReference type="ChEBI" id="CHEBI:37565"/>
        <dbReference type="ChEBI" id="CHEBI:43474"/>
        <dbReference type="ChEBI" id="CHEBI:57567"/>
        <dbReference type="ChEBI" id="CHEBI:58053"/>
        <dbReference type="ChEBI" id="CHEBI:58189"/>
        <dbReference type="EC" id="6.3.4.4"/>
    </reaction>
</comment>
<comment type="cofactor">
    <cofactor evidence="1">
        <name>Mg(2+)</name>
        <dbReference type="ChEBI" id="CHEBI:18420"/>
    </cofactor>
    <text evidence="1">Binds 1 Mg(2+) ion per subunit.</text>
</comment>
<comment type="pathway">
    <text evidence="1">Purine metabolism; AMP biosynthesis via de novo pathway; AMP from IMP: step 1/2.</text>
</comment>
<comment type="subunit">
    <text evidence="1">Homodimer.</text>
</comment>
<comment type="subcellular location">
    <subcellularLocation>
        <location evidence="1">Cytoplasm</location>
    </subcellularLocation>
</comment>
<comment type="similarity">
    <text evidence="1">Belongs to the adenylosuccinate synthetase family.</text>
</comment>
<evidence type="ECO:0000255" key="1">
    <source>
        <dbReference type="HAMAP-Rule" id="MF_00011"/>
    </source>
</evidence>
<organism>
    <name type="scientific">Rhodopseudomonas palustris (strain TIE-1)</name>
    <dbReference type="NCBI Taxonomy" id="395960"/>
    <lineage>
        <taxon>Bacteria</taxon>
        <taxon>Pseudomonadati</taxon>
        <taxon>Pseudomonadota</taxon>
        <taxon>Alphaproteobacteria</taxon>
        <taxon>Hyphomicrobiales</taxon>
        <taxon>Nitrobacteraceae</taxon>
        <taxon>Rhodopseudomonas</taxon>
    </lineage>
</organism>
<keyword id="KW-0963">Cytoplasm</keyword>
<keyword id="KW-0342">GTP-binding</keyword>
<keyword id="KW-0436">Ligase</keyword>
<keyword id="KW-0460">Magnesium</keyword>
<keyword id="KW-0479">Metal-binding</keyword>
<keyword id="KW-0547">Nucleotide-binding</keyword>
<keyword id="KW-0658">Purine biosynthesis</keyword>